<dbReference type="EMBL" id="AB091779">
    <property type="protein sequence ID" value="BAC65235.1"/>
    <property type="molecule type" value="mRNA"/>
</dbReference>
<dbReference type="EMBL" id="BC170556">
    <property type="protein sequence ID" value="AAI70556.1"/>
    <property type="molecule type" value="mRNA"/>
</dbReference>
<dbReference type="EMBL" id="BC170557">
    <property type="protein sequence ID" value="AAI70557.1"/>
    <property type="molecule type" value="mRNA"/>
</dbReference>
<dbReference type="RefSeq" id="NP_001082568.1">
    <property type="nucleotide sequence ID" value="NM_001089099.1"/>
</dbReference>
<dbReference type="SMR" id="Q800K6"/>
<dbReference type="BioGRID" id="99905">
    <property type="interactions" value="6"/>
</dbReference>
<dbReference type="IntAct" id="Q800K6">
    <property type="interactions" value="2"/>
</dbReference>
<dbReference type="iPTMnet" id="Q800K6"/>
<dbReference type="GeneID" id="398573"/>
<dbReference type="KEGG" id="xla:398573"/>
<dbReference type="AGR" id="Xenbase:XB-GENE-990641"/>
<dbReference type="CTD" id="398573"/>
<dbReference type="Xenbase" id="XB-GENE-990641">
    <property type="gene designation" value="topbp1.L"/>
</dbReference>
<dbReference type="OrthoDB" id="251770at2759"/>
<dbReference type="Proteomes" id="UP000186698">
    <property type="component" value="Chromosome 6L"/>
</dbReference>
<dbReference type="Bgee" id="398573">
    <property type="expression patterns" value="Expressed in egg cell and 19 other cell types or tissues"/>
</dbReference>
<dbReference type="GO" id="GO:0005813">
    <property type="term" value="C:centrosome"/>
    <property type="evidence" value="ECO:0007669"/>
    <property type="project" value="UniProtKB-SubCell"/>
</dbReference>
<dbReference type="GO" id="GO:0000785">
    <property type="term" value="C:chromatin"/>
    <property type="evidence" value="ECO:0000314"/>
    <property type="project" value="UniProtKB"/>
</dbReference>
<dbReference type="GO" id="GO:0005737">
    <property type="term" value="C:cytoplasm"/>
    <property type="evidence" value="ECO:0007669"/>
    <property type="project" value="UniProtKB-KW"/>
</dbReference>
<dbReference type="GO" id="GO:0005634">
    <property type="term" value="C:nucleus"/>
    <property type="evidence" value="ECO:0000314"/>
    <property type="project" value="UniProtKB"/>
</dbReference>
<dbReference type="GO" id="GO:0035861">
    <property type="term" value="C:site of double-strand break"/>
    <property type="evidence" value="ECO:0000250"/>
    <property type="project" value="UniProtKB"/>
</dbReference>
<dbReference type="GO" id="GO:0000922">
    <property type="term" value="C:spindle pole"/>
    <property type="evidence" value="ECO:0007669"/>
    <property type="project" value="UniProtKB-SubCell"/>
</dbReference>
<dbReference type="GO" id="GO:0003682">
    <property type="term" value="F:chromatin binding"/>
    <property type="evidence" value="ECO:0000314"/>
    <property type="project" value="UniProtKB"/>
</dbReference>
<dbReference type="GO" id="GO:0140463">
    <property type="term" value="F:chromatin-protein adaptor activity"/>
    <property type="evidence" value="ECO:0000250"/>
    <property type="project" value="UniProtKB"/>
</dbReference>
<dbReference type="GO" id="GO:0003677">
    <property type="term" value="F:DNA binding"/>
    <property type="evidence" value="ECO:0007669"/>
    <property type="project" value="UniProtKB-KW"/>
</dbReference>
<dbReference type="GO" id="GO:0019900">
    <property type="term" value="F:kinase binding"/>
    <property type="evidence" value="ECO:0000353"/>
    <property type="project" value="UniProtKB"/>
</dbReference>
<dbReference type="GO" id="GO:0140031">
    <property type="term" value="F:phosphorylation-dependent protein binding"/>
    <property type="evidence" value="ECO:0000250"/>
    <property type="project" value="UniProtKB"/>
</dbReference>
<dbReference type="GO" id="GO:0043539">
    <property type="term" value="F:protein serine/threonine kinase activator activity"/>
    <property type="evidence" value="ECO:0000250"/>
    <property type="project" value="UniProtKB"/>
</dbReference>
<dbReference type="GO" id="GO:0051276">
    <property type="term" value="P:chromosome organization"/>
    <property type="evidence" value="ECO:0000250"/>
    <property type="project" value="UniProtKB"/>
</dbReference>
<dbReference type="GO" id="GO:0006277">
    <property type="term" value="P:DNA amplification"/>
    <property type="evidence" value="ECO:0000315"/>
    <property type="project" value="Xenbase"/>
</dbReference>
<dbReference type="GO" id="GO:0006974">
    <property type="term" value="P:DNA damage response"/>
    <property type="evidence" value="ECO:0000315"/>
    <property type="project" value="UniProtKB"/>
</dbReference>
<dbReference type="GO" id="GO:0000076">
    <property type="term" value="P:DNA replication checkpoint signaling"/>
    <property type="evidence" value="ECO:0000315"/>
    <property type="project" value="UniProtKB"/>
</dbReference>
<dbReference type="GO" id="GO:0006270">
    <property type="term" value="P:DNA replication initiation"/>
    <property type="evidence" value="ECO:0000315"/>
    <property type="project" value="UniProtKB"/>
</dbReference>
<dbReference type="GO" id="GO:0071163">
    <property type="term" value="P:DNA replication preinitiation complex assembly"/>
    <property type="evidence" value="ECO:0000315"/>
    <property type="project" value="UniProtKB"/>
</dbReference>
<dbReference type="GO" id="GO:0097681">
    <property type="term" value="P:double-strand break repair via alternative nonhomologous end joining"/>
    <property type="evidence" value="ECO:0000250"/>
    <property type="project" value="UniProtKB"/>
</dbReference>
<dbReference type="GO" id="GO:0000724">
    <property type="term" value="P:double-strand break repair via homologous recombination"/>
    <property type="evidence" value="ECO:0000250"/>
    <property type="project" value="UniProtKB"/>
</dbReference>
<dbReference type="GO" id="GO:0071165">
    <property type="term" value="P:GINS complex assembly"/>
    <property type="evidence" value="ECO:0000315"/>
    <property type="project" value="UniProtKB"/>
</dbReference>
<dbReference type="GO" id="GO:0033314">
    <property type="term" value="P:mitotic DNA replication checkpoint signaling"/>
    <property type="evidence" value="ECO:0000318"/>
    <property type="project" value="GO_Central"/>
</dbReference>
<dbReference type="GO" id="GO:0007095">
    <property type="term" value="P:mitotic G2 DNA damage checkpoint signaling"/>
    <property type="evidence" value="ECO:0000318"/>
    <property type="project" value="GO_Central"/>
</dbReference>
<dbReference type="GO" id="GO:0035563">
    <property type="term" value="P:positive regulation of chromatin binding"/>
    <property type="evidence" value="ECO:0000315"/>
    <property type="project" value="UniProtKB"/>
</dbReference>
<dbReference type="GO" id="GO:0033138">
    <property type="term" value="P:positive regulation of peptidyl-serine phosphorylation"/>
    <property type="evidence" value="ECO:0000314"/>
    <property type="project" value="UniProtKB"/>
</dbReference>
<dbReference type="GO" id="GO:0045860">
    <property type="term" value="P:positive regulation of protein kinase activity"/>
    <property type="evidence" value="ECO:0000314"/>
    <property type="project" value="UniProtKB"/>
</dbReference>
<dbReference type="GO" id="GO:0071168">
    <property type="term" value="P:protein localization to chromatin"/>
    <property type="evidence" value="ECO:0000315"/>
    <property type="project" value="UniProtKB"/>
</dbReference>
<dbReference type="GO" id="GO:0030174">
    <property type="term" value="P:regulation of DNA-templated DNA replication initiation"/>
    <property type="evidence" value="ECO:0000315"/>
    <property type="project" value="UniProtKB"/>
</dbReference>
<dbReference type="CDD" id="cd17737">
    <property type="entry name" value="BRCT_TopBP1_rpt1"/>
    <property type="match status" value="1"/>
</dbReference>
<dbReference type="CDD" id="cd17731">
    <property type="entry name" value="BRCT_TopBP1_rpt2_like"/>
    <property type="match status" value="1"/>
</dbReference>
<dbReference type="CDD" id="cd17718">
    <property type="entry name" value="BRCT_TopBP1_rpt3"/>
    <property type="match status" value="1"/>
</dbReference>
<dbReference type="CDD" id="cd17749">
    <property type="entry name" value="BRCT_TopBP1_rpt4"/>
    <property type="match status" value="1"/>
</dbReference>
<dbReference type="CDD" id="cd18434">
    <property type="entry name" value="BRCT_TopBP1_rpt5"/>
    <property type="match status" value="1"/>
</dbReference>
<dbReference type="CDD" id="cd17727">
    <property type="entry name" value="BRCT_TopBP1_rpt6"/>
    <property type="match status" value="1"/>
</dbReference>
<dbReference type="CDD" id="cd17738">
    <property type="entry name" value="BRCT_TopBP1_rpt7"/>
    <property type="match status" value="1"/>
</dbReference>
<dbReference type="CDD" id="cd17728">
    <property type="entry name" value="BRCT_TopBP1_rpt8"/>
    <property type="match status" value="1"/>
</dbReference>
<dbReference type="FunFam" id="3.40.50.10190:FF:000018">
    <property type="entry name" value="DNA topoisomerase 2-binding protein 1"/>
    <property type="match status" value="1"/>
</dbReference>
<dbReference type="FunFam" id="3.40.50.10190:FF:000028">
    <property type="entry name" value="DNA topoisomerase 2-binding protein 1 isoform X1"/>
    <property type="match status" value="1"/>
</dbReference>
<dbReference type="FunFam" id="3.40.50.10190:FF:000010">
    <property type="entry name" value="DNA topoisomerase II binding protein 1"/>
    <property type="match status" value="1"/>
</dbReference>
<dbReference type="FunFam" id="3.40.50.10190:FF:000020">
    <property type="entry name" value="DNA topoisomerase II binding protein 1"/>
    <property type="match status" value="1"/>
</dbReference>
<dbReference type="FunFam" id="3.40.50.10190:FF:000021">
    <property type="entry name" value="DNA topoisomerase II binding protein 1"/>
    <property type="match status" value="1"/>
</dbReference>
<dbReference type="FunFam" id="3.40.50.10190:FF:000022">
    <property type="entry name" value="DNA topoisomerase II binding protein 1"/>
    <property type="match status" value="1"/>
</dbReference>
<dbReference type="FunFam" id="3.40.50.10190:FF:000023">
    <property type="entry name" value="DNA topoisomerase II binding protein 1"/>
    <property type="match status" value="1"/>
</dbReference>
<dbReference type="FunFam" id="3.40.50.10190:FF:000029">
    <property type="entry name" value="DNA topoisomerase II binding protein 1"/>
    <property type="match status" value="1"/>
</dbReference>
<dbReference type="FunFam" id="3.40.50.10190:FF:000033">
    <property type="entry name" value="DNA topoisomerase II binding protein 1"/>
    <property type="match status" value="1"/>
</dbReference>
<dbReference type="Gene3D" id="3.40.50.10190">
    <property type="entry name" value="BRCT domain"/>
    <property type="match status" value="9"/>
</dbReference>
<dbReference type="InterPro" id="IPR001357">
    <property type="entry name" value="BRCT_dom"/>
</dbReference>
<dbReference type="InterPro" id="IPR036420">
    <property type="entry name" value="BRCT_dom_sf"/>
</dbReference>
<dbReference type="InterPro" id="IPR049936">
    <property type="entry name" value="BRCT_TopBP1_rpt8"/>
</dbReference>
<dbReference type="InterPro" id="IPR035960">
    <property type="entry name" value="Secretoglobin_sf"/>
</dbReference>
<dbReference type="InterPro" id="IPR049542">
    <property type="entry name" value="TopBP1-like_BRCT0"/>
</dbReference>
<dbReference type="InterPro" id="IPR044737">
    <property type="entry name" value="TopBP1_BRCT_1"/>
</dbReference>
<dbReference type="PANTHER" id="PTHR13561">
    <property type="entry name" value="DNA REPLICATION REGULATOR DPB11-RELATED"/>
    <property type="match status" value="1"/>
</dbReference>
<dbReference type="PANTHER" id="PTHR13561:SF20">
    <property type="entry name" value="DNA TOPOISOMERASE 2-BINDING PROTEIN 1"/>
    <property type="match status" value="1"/>
</dbReference>
<dbReference type="Pfam" id="PF00533">
    <property type="entry name" value="BRCT"/>
    <property type="match status" value="4"/>
</dbReference>
<dbReference type="Pfam" id="PF23294">
    <property type="entry name" value="BRCT_TopB1_SLF1"/>
    <property type="match status" value="1"/>
</dbReference>
<dbReference type="Pfam" id="PF12738">
    <property type="entry name" value="PTCB-BRCT"/>
    <property type="match status" value="2"/>
</dbReference>
<dbReference type="Pfam" id="PF21298">
    <property type="entry name" value="TopBP1_BRCT0"/>
    <property type="match status" value="1"/>
</dbReference>
<dbReference type="SMART" id="SM00292">
    <property type="entry name" value="BRCT"/>
    <property type="match status" value="9"/>
</dbReference>
<dbReference type="SUPFAM" id="SSF52113">
    <property type="entry name" value="BRCT domain"/>
    <property type="match status" value="6"/>
</dbReference>
<dbReference type="SUPFAM" id="SSF48201">
    <property type="entry name" value="Uteroglobin-like"/>
    <property type="match status" value="1"/>
</dbReference>
<dbReference type="PROSITE" id="PS50172">
    <property type="entry name" value="BRCT"/>
    <property type="match status" value="7"/>
</dbReference>
<sequence length="1513" mass="169288">MASSENEPFCVKFIKSPENSEYFFKAYEAIKQIQSDESLQLTEEREALLLKEKDKSLYICDPFSGAAFSHLKKLGCRIVGPQVVIFCMENQRRVPRAEYPVYNMAMADVTISCTSLDKETREDVHHYVQIMGGCVYRDLNVSVTHLIAGEVGSKKYLVAASLEKPILLPSWVKELWEKSNQRIIRYSDVNMTEYLCPIFRGCTICVTGLSSLDRKEVQRLTALHGGEYTGQLKMNESTHLIVQEAKGQKYECARKWNVHCISVQWFFDSIEKGFCQDETMYKIEPASTIKSVPDTSTPTGGNSKPNSRTLYDVSQISNISTSCVNESAFNSAMASRLDPPADTLENLDISSLQAPDDLLDGCRIYLCGFGGRKLDKLRKLINNGGGVRFNQLTGDVTHIIVGETDEELKQFLNKTQHRPYVLTVKWLLDSFAKGHLQPEEIYFHSSYQQTEMPSPFEPAINLTANKMSSTRDPLNHTRNHQADEDLLSQYTENNSTLIEDEHPKTSNTNSISQMSMHEDMTTCTSQSGLADTSTIIEGGLFSRKQFMVLGFLEEDEACIIDIIKKSAGKVLSSQKRAIADYAVVPLLGCEVESTVGEVVTNAWLGMCIEQEKLLDPHSNALFTPVPFLEGSTPLRECVLSVSQFMGAERDSLVYLAGLLGAKVQEFFVRKANPKKGMFASTHLVLKDAEGSKYEAAKKWNLPAVTMNWLLQCARTGRKADEDSYLVDNVPEEDKDESFISQTYKPQAIRLSMHAPCHLENHPEALTKAAVTPLDMNRFKSKAFQSVISQHNKNPQTSGGESKVLQREPSLHLDTPSKFLSKDKLFKPSFDVKDALAALETPGGPNQKNRTQSTPLSEVIGRNLQLAIANSTRQTAAVTASPQLKAAEKKEFDNSKLLINVVICVSKKLIKKQGELNGIAASLGAEYRWCFDESVTHFIYHGRQNDMSREYKSVKERSGIYIVSEHWLFACSEQQKRVPEALYPHTYNPKMSLDISAVQDGSYTASKFSADTSLQQDENSELQLQQNNKFGETSDDQVKKAAGDGNPQNPSKDVKGALTQTLEMRENFQRQLQEFMSATSVVKPRGSVGRAGFDNSPCTPEGARSTRNGRSRVLEALRQSRQAMTDLNTEPSQNEQIIWDDPTAREERAKLVSNLQWPDSPSQYSEQLQHNMNDAGGNYTPAKESLTDTEIAELEACEFEPKSAMRTPVIENNLQSPTKPDHLTPTPQAPSIAFPLANPPVAPQPREKPVQPFSKEETLKERRFQLSSLDPQERIDYSQLIEELGGVVIEKQCFDPSCTHIVVGHPLRNEKYLASMAAGKWVLHRSYLEACRAAKRFIQEEDYEWGSMSILSAVTNINPQQRMLAEAAMRWRKKLQGIKQNMGIAEGAFSGWKVILNVDQTKEPGFKRLLQSGGAKVFAGHSSPLFKEASHLFADFSKLKPDEPRVNVAEAAAQGVNCLKPEYIADYLMKELPPPMNNYCLPDAIPYVRVTGTGLSRKRKTSGDVSDVKRSRHY</sequence>
<reference evidence="17 19" key="1">
    <citation type="journal article" date="2003" name="EMBO J.">
        <title>Xenopus Cut5 is essential for a CDK-dependent process in the initiation of DNA replication.</title>
        <authorList>
            <person name="Hashimoto Y."/>
            <person name="Takisawa H."/>
        </authorList>
    </citation>
    <scope>NUCLEOTIDE SEQUENCE [MRNA]</scope>
    <scope>FUNCTION</scope>
    <scope>INTERACTION WITH CDC45</scope>
    <scope>SUBCELLULAR LOCATION</scope>
    <source>
        <tissue evidence="6">Oocyte</tissue>
    </source>
</reference>
<reference evidence="18" key="2">
    <citation type="submission" date="2008-11" db="EMBL/GenBank/DDBJ databases">
        <authorList>
            <consortium name="NIH - Xenopus Gene Collection (XGC) project"/>
        </authorList>
    </citation>
    <scope>NUCLEOTIDE SEQUENCE [LARGE SCALE MRNA]</scope>
    <source>
        <tissue evidence="18">Oocyte</tissue>
    </source>
</reference>
<reference evidence="17" key="3">
    <citation type="journal article" date="2003" name="Genes Dev.">
        <title>A novel ring-like complex of Xenopus proteins essential for the initiation of DNA replication.</title>
        <authorList>
            <person name="Kubota Y."/>
            <person name="Takase Y."/>
            <person name="Komori Y."/>
            <person name="Hashimoto Y."/>
            <person name="Arata T."/>
            <person name="Kamimura Y."/>
            <person name="Araki H."/>
            <person name="Takisawa H."/>
        </authorList>
    </citation>
    <scope>FUNCTION</scope>
</reference>
<reference evidence="17" key="4">
    <citation type="journal article" date="2003" name="J. Biol. Chem.">
        <title>Cut5 is required for the binding of Atr and DNA polymerase alpha to genotoxin-damaged chromatin.</title>
        <authorList>
            <person name="Parrilla-Castellar E.R."/>
            <person name="Karnitz L.M."/>
        </authorList>
    </citation>
    <scope>FUNCTION</scope>
</reference>
<reference evidence="17" key="5">
    <citation type="journal article" date="2005" name="Cell">
        <title>Initiation of DNA replication requires the RECQL4 protein mutated in Rothmund-Thomson syndrome.</title>
        <authorList>
            <person name="Sangrithi M.N."/>
            <person name="Bernal J.A."/>
            <person name="Madine M."/>
            <person name="Philpott A."/>
            <person name="Lee J."/>
            <person name="Dunphy W.G."/>
            <person name="Venkitaraman A.R."/>
        </authorList>
    </citation>
    <scope>FUNCTION</scope>
    <scope>SUBCELLULAR LOCATION</scope>
</reference>
<reference evidence="17" key="6">
    <citation type="journal article" date="2006" name="Cell">
        <title>TopBP1 activates the ATR-ATRIP complex.</title>
        <authorList>
            <person name="Kumagai A."/>
            <person name="Lee J."/>
            <person name="Yoo H.Y."/>
            <person name="Dunphy W.G."/>
        </authorList>
    </citation>
    <scope>FUNCTION</scope>
    <scope>INTERACTION WITH ATR</scope>
    <scope>MUTAGENESIS OF TRP-1138</scope>
</reference>
<reference evidence="17" key="7">
    <citation type="journal article" date="2006" name="Genes Cells">
        <title>The phosphorylated C-terminal domain of Xenopus Cut5 directly mediates ATR-dependent activation of Chk1.</title>
        <authorList>
            <person name="Hashimoto Y."/>
            <person name="Tsujimura T."/>
            <person name="Sugino A."/>
            <person name="Takisawa H."/>
        </authorList>
    </citation>
    <scope>FUNCTION</scope>
    <scope>DOMAIN</scope>
    <scope>PHOSPHORYLATION AT SER-1131</scope>
    <scope>MUTAGENESIS OF SER-1131</scope>
</reference>
<reference evidence="17" key="8">
    <citation type="journal article" date="2006" name="Mol. Biol. Cell">
        <title>Phosphorylation of Xenopus Rad1 and Hus1 defines a readout for ATR activation that is independent of Claspin and the Rad9 carboxy terminus.</title>
        <authorList>
            <person name="Lupardus P.J."/>
            <person name="Cimprich K.A."/>
        </authorList>
    </citation>
    <scope>FUNCTION</scope>
</reference>
<reference evidence="17" key="9">
    <citation type="journal article" date="2006" name="Mol. Cell. Biol.">
        <title>The N-terminal noncatalytic region of Xenopus RecQ4 is required for chromatin binding of DNA polymerase alpha in the initiation of DNA replication.</title>
        <authorList>
            <person name="Matsuno K."/>
            <person name="Kumano M."/>
            <person name="Kubota Y."/>
            <person name="Hashimoto Y."/>
            <person name="Takisawa H."/>
        </authorList>
    </citation>
    <scope>INTERACTION WITH RECQL4</scope>
    <scope>SUBCELLULAR LOCATION</scope>
</reference>
<reference evidence="17" key="10">
    <citation type="journal article" date="2010" name="Cell">
        <title>Treslin collaborates with TopBP1 in triggering the initiation of DNA replication.</title>
        <authorList>
            <person name="Kumagai A."/>
            <person name="Shevchenko A."/>
            <person name="Shevchenko A."/>
            <person name="Dunphy W.G."/>
        </authorList>
    </citation>
    <scope>FUNCTION</scope>
    <scope>INTERACTION WITH TICRR</scope>
    <scope>SUBCELLULAR LOCATION</scope>
</reference>
<reference evidence="17" key="11">
    <citation type="journal article" date="2010" name="Nat. Cell Biol.">
        <title>GEMC1 is a TopBP1-interacting protein required for chromosomal DNA replication.</title>
        <authorList>
            <person name="Balestrini A."/>
            <person name="Cosentino C."/>
            <person name="Errico A."/>
            <person name="Garner E."/>
            <person name="Costanzo V."/>
        </authorList>
    </citation>
    <scope>FUNCTION</scope>
    <scope>INTERACTION WITH GMNC</scope>
</reference>
<protein>
    <recommendedName>
        <fullName>DNA topoisomerase 2-binding protein 1-A</fullName>
    </recommendedName>
    <alternativeName>
        <fullName evidence="15">Cut5 protein</fullName>
    </alternativeName>
    <alternativeName>
        <fullName>DNA topoisomerase II-binding protein 1-A</fullName>
        <shortName>TopBP1-A</shortName>
        <shortName evidence="16">XtopBP</shortName>
    </alternativeName>
</protein>
<gene>
    <name type="primary">topbp1-A</name>
    <name evidence="15" type="synonym">cut5</name>
</gene>
<proteinExistence type="evidence at protein level"/>
<name>TOB1A_XENLA</name>
<accession>Q800K6</accession>
<accession>B7ZSK6</accession>
<feature type="chain" id="PRO_0000397210" description="DNA topoisomerase 2-binding protein 1-A">
    <location>
        <begin position="1"/>
        <end position="1513"/>
    </location>
</feature>
<feature type="domain" description="BRCT 1" evidence="3">
    <location>
        <begin position="101"/>
        <end position="189"/>
    </location>
</feature>
<feature type="domain" description="BRCT 2" evidence="3">
    <location>
        <begin position="194"/>
        <end position="283"/>
    </location>
</feature>
<feature type="domain" description="BRCT 3" evidence="3">
    <location>
        <begin position="354"/>
        <end position="444"/>
    </location>
</feature>
<feature type="domain" description="BRCT 4" evidence="3">
    <location>
        <begin position="530"/>
        <end position="621"/>
    </location>
</feature>
<feature type="domain" description="BRCT 5" evidence="3">
    <location>
        <begin position="629"/>
        <end position="726"/>
    </location>
</feature>
<feature type="domain" description="BRCT 6" evidence="3">
    <location>
        <begin position="892"/>
        <end position="984"/>
    </location>
</feature>
<feature type="domain" description="BRCT 7" evidence="3">
    <location>
        <begin position="1253"/>
        <end position="1344"/>
    </location>
</feature>
<feature type="domain" description="BRCT 8" evidence="3">
    <location>
        <begin position="1383"/>
        <end position="1480"/>
    </location>
</feature>
<feature type="region of interest" description="Disordered" evidence="4">
    <location>
        <begin position="289"/>
        <end position="308"/>
    </location>
</feature>
<feature type="region of interest" description="Disordered" evidence="4">
    <location>
        <begin position="789"/>
        <end position="809"/>
    </location>
</feature>
<feature type="region of interest" description="Disordered" evidence="4">
    <location>
        <begin position="1031"/>
        <end position="1053"/>
    </location>
</feature>
<feature type="region of interest" description="Disordered" evidence="4">
    <location>
        <begin position="1086"/>
        <end position="1109"/>
    </location>
</feature>
<feature type="short sequence motif" description="Nuclear localization signal" evidence="2">
    <location>
        <begin position="844"/>
        <end position="850"/>
    </location>
</feature>
<feature type="short sequence motif" description="Nuclear localization signal" evidence="2">
    <location>
        <begin position="1508"/>
        <end position="1511"/>
    </location>
</feature>
<feature type="compositionally biased region" description="Polar residues" evidence="4">
    <location>
        <begin position="789"/>
        <end position="799"/>
    </location>
</feature>
<feature type="modified residue" description="Phosphoserine" evidence="12">
    <location>
        <position position="1131"/>
    </location>
</feature>
<feature type="mutagenesis site" description="Prevents phosphorylation. Prevents role in checkpoint activation." evidence="12">
    <original>S</original>
    <variation>A</variation>
    <location>
        <position position="1131"/>
    </location>
</feature>
<feature type="mutagenesis site" description="Phosphomimic. Exhibits minor defects in checkpoint activation." evidence="12">
    <original>S</original>
    <variation>E</variation>
    <location>
        <position position="1131"/>
    </location>
</feature>
<feature type="mutagenesis site" description="Abolishes activation of kinase activity of atr but no effect on atr binding. Defective in checkpoint regulation. No effect on DNA replication." evidence="10">
    <original>W</original>
    <variation>R</variation>
    <location>
        <position position="1138"/>
    </location>
</feature>
<feature type="sequence conflict" description="In Ref. 1; BAC65235." evidence="17" ref="1">
    <original>T</original>
    <variation>A</variation>
    <location>
        <position position="309"/>
    </location>
</feature>
<feature type="sequence conflict" description="In Ref. 1; BAC65235." evidence="17" ref="1">
    <original>D</original>
    <variation>G</variation>
    <location>
        <position position="472"/>
    </location>
</feature>
<feature type="sequence conflict" description="In Ref. 1; BAC65235." evidence="17" ref="1">
    <original>T</original>
    <variation>S</variation>
    <location>
        <position position="1188"/>
    </location>
</feature>
<feature type="sequence conflict" description="In Ref. 1; BAC65235." evidence="17" ref="1">
    <original>M</original>
    <variation>I</variation>
    <location>
        <position position="1347"/>
    </location>
</feature>
<organism>
    <name type="scientific">Xenopus laevis</name>
    <name type="common">African clawed frog</name>
    <dbReference type="NCBI Taxonomy" id="8355"/>
    <lineage>
        <taxon>Eukaryota</taxon>
        <taxon>Metazoa</taxon>
        <taxon>Chordata</taxon>
        <taxon>Craniata</taxon>
        <taxon>Vertebrata</taxon>
        <taxon>Euteleostomi</taxon>
        <taxon>Amphibia</taxon>
        <taxon>Batrachia</taxon>
        <taxon>Anura</taxon>
        <taxon>Pipoidea</taxon>
        <taxon>Pipidae</taxon>
        <taxon>Xenopodinae</taxon>
        <taxon>Xenopus</taxon>
        <taxon>Xenopus</taxon>
    </lineage>
</organism>
<evidence type="ECO:0000250" key="1">
    <source>
        <dbReference type="UniProtKB" id="Q92547"/>
    </source>
</evidence>
<evidence type="ECO:0000255" key="2"/>
<evidence type="ECO:0000255" key="3">
    <source>
        <dbReference type="PROSITE-ProRule" id="PRU00033"/>
    </source>
</evidence>
<evidence type="ECO:0000256" key="4">
    <source>
        <dbReference type="SAM" id="MobiDB-lite"/>
    </source>
</evidence>
<evidence type="ECO:0000269" key="5">
    <source>
    </source>
</evidence>
<evidence type="ECO:0000269" key="6">
    <source>
    </source>
</evidence>
<evidence type="ECO:0000269" key="7">
    <source>
    </source>
</evidence>
<evidence type="ECO:0000269" key="8">
    <source>
    </source>
</evidence>
<evidence type="ECO:0000269" key="9">
    <source>
    </source>
</evidence>
<evidence type="ECO:0000269" key="10">
    <source>
    </source>
</evidence>
<evidence type="ECO:0000269" key="11">
    <source>
    </source>
</evidence>
<evidence type="ECO:0000269" key="12">
    <source>
    </source>
</evidence>
<evidence type="ECO:0000269" key="13">
    <source>
    </source>
</evidence>
<evidence type="ECO:0000269" key="14">
    <source>
    </source>
</evidence>
<evidence type="ECO:0000303" key="15">
    <source>
    </source>
</evidence>
<evidence type="ECO:0000303" key="16">
    <source>
    </source>
</evidence>
<evidence type="ECO:0000305" key="17"/>
<evidence type="ECO:0000312" key="18">
    <source>
        <dbReference type="EMBL" id="AAI70556.1"/>
    </source>
</evidence>
<evidence type="ECO:0000312" key="19">
    <source>
        <dbReference type="EMBL" id="BAC65235.1"/>
    </source>
</evidence>
<keyword id="KW-0131">Cell cycle</keyword>
<keyword id="KW-0158">Chromosome</keyword>
<keyword id="KW-0963">Cytoplasm</keyword>
<keyword id="KW-0206">Cytoskeleton</keyword>
<keyword id="KW-0227">DNA damage</keyword>
<keyword id="KW-0234">DNA repair</keyword>
<keyword id="KW-0235">DNA replication</keyword>
<keyword id="KW-0238">DNA-binding</keyword>
<keyword id="KW-0539">Nucleus</keyword>
<keyword id="KW-0597">Phosphoprotein</keyword>
<keyword id="KW-1185">Reference proteome</keyword>
<keyword id="KW-0677">Repeat</keyword>
<comment type="function">
    <text evidence="1 5 6 7 8 9 10 12 13 14">Scaffold protein that acts as a key protein-protein adapter in DNA replication and DNA repair (PubMed:12730133, PubMed:12743046, PubMed:14525986, PubMed:15960976, PubMed:16436514, PubMed:16530042, PubMed:16923121, PubMed:20116089, PubMed:20383140). Composed of multiple BRCT domains, which specifically recognize and bind phosphorylated proteins, bringing proteins together into functional combinations (By similarity). Required for DNA replication initiation but not for the formation of pre-replicative complexes or the elongation stages (PubMed:12730133, PubMed:12743046, PubMed:15960976, PubMed:20116089). Necessary for the loading of replication factors onto chromatin, including gmnc, cdc45, DNA polymerases and components of the GINS complex such as ginsl/sld5 (PubMed:12743046, PubMed:20383140). Plays a central role in DNA repair by bridging proteins and promoting recruitment of proteins to DNA damage sites (By similarity). Involved in double-strand break (DSB) repair via homologous recombination in S-phase by promoting the exchange between the DNA replication factor A (RPA) complex and RAD51 (By similarity). Involved in microhomology-mediated end-joining (MMEJ) DNA repair by promoting recruitment of polymerase theta (POLQ) to DNA damage sites during mitosis (By similarity). In response to DNA damage, triggers the recruitment of checkpoint signaling proteins on chromatin, which activate the chek1 signaling pathway and block S-phase progression (PubMed:14525986, PubMed:16436514, PubMed:16530042, PubMed:16923121). Increases the kinase activity of atr to numerous substrates, and is required for the phosphorylation of Rad1 (PubMed:16530042, PubMed:16923121). Together with cip2a, plays an essential role in the response to genome instability generated by the presence of acentric chromosome fragments derived from shattered chromosomes within micronuclei (By similarity). The CIP2A-TOPBP1 complex tethers chromosome fragments during mitosis to ensure clustered segregation of the fragments to a single daughter cell nucleus, facilitating re-ligation with limited chromosome scattering and loss (By similarity).</text>
</comment>
<comment type="subunit">
    <text evidence="1 6 10 11 13 14">Interacts with cdc45 (PubMed:12743046). Interacts (via BRCT domains) with ticrr; interaction is cdk2-dependent (PubMed:20116089). Interacts with atr in the presence of atrip (PubMed:16530042). Interacts with recql4 (via N-terminus) (PubMed:16782873). Interacts with gmnc (PubMed:20383140). Interacts with cip2a; forming the CIP2A-TOPBP1 complex (By similarity).</text>
</comment>
<comment type="interaction">
    <interactant intactId="EBI-2607374">
        <id>Q800K6</id>
    </interactant>
    <interactant intactId="EBI-2607396">
        <id>D3IUT5</id>
        <label>ticrr</label>
    </interactant>
    <organismsDiffer>false</organismsDiffer>
    <experiments>4</experiments>
</comment>
<comment type="subcellular location">
    <subcellularLocation>
        <location evidence="6 8 11 13">Nucleus</location>
    </subcellularLocation>
    <subcellularLocation>
        <location evidence="1">Chromosome</location>
    </subcellularLocation>
    <subcellularLocation>
        <location evidence="1">Cytoplasm</location>
        <location evidence="1">Cytoskeleton</location>
        <location evidence="1">Microtubule organizing center</location>
        <location evidence="1">Centrosome</location>
    </subcellularLocation>
    <subcellularLocation>
        <location evidence="1">Cytoplasm</location>
        <location evidence="1">Cytoskeleton</location>
        <location evidence="1">Spindle pole</location>
    </subcellularLocation>
    <text evidence="1 13">Localizes to sites of DNA damage, such as double-stranded breaks (DSBs) (By similarity). Binds chromatin in both S-phase cyclin-dependent kinase (S-CDK)-independent and S-CDK-dependent modes (PubMed:20116089).</text>
</comment>
<comment type="domain">
    <text evidence="1">Some BRCT domains specifically recognize and bind phosphoserine/phosphothreonine marks on proteins.</text>
</comment>
<comment type="domain">
    <text evidence="12">The N-terminal half is sufficient for DNA replication.</text>
</comment>
<comment type="PTM">
    <text evidence="12">Phosphorylation at Ser-1131 is essential for phosphorylation of chek1, and thus for checkpoint regulation.</text>
</comment>
<comment type="similarity">
    <text evidence="17">Belongs to the TOPBP1 family.</text>
</comment>